<proteinExistence type="evidence at protein level"/>
<accession>P67127</accession>
<accession>Q2MA05</accession>
<accession>Q46931</accession>
<comment type="subcellular location">
    <subcellularLocation>
        <location>Cell inner membrane</location>
        <topology>Multi-pass membrane protein</topology>
    </subcellularLocation>
</comment>
<comment type="similarity">
    <text evidence="2">Belongs to the UPF0053 family.</text>
</comment>
<sequence>MLFAWITDPNAWLALGTLTLLEIVLGIDNIIFLSLVVAKLPTAQRAHARRLGLAGAMVMRLALLASIAWVTRLTNPLFTIFSQEISARDLILLLGGLFLIWKASKEIHESIEGEEEGLKTRVSSFLGAIVQIMLLDIIFSLDSVITAVGLSDHLFIMMAAVVIAVGVMMFAARSIGDFVERHPSVKMLALSFLILVGFTLILESFDIHVPKGYIYFAMFFSIAVESLNLIRNKKNPL</sequence>
<gene>
    <name type="primary">ygdQ</name>
    <name type="ordered locus">b2832</name>
    <name type="ordered locus">JW2800</name>
</gene>
<evidence type="ECO:0000255" key="1"/>
<evidence type="ECO:0000305" key="2"/>
<feature type="chain" id="PRO_0000088366" description="UPF0053 inner membrane protein YgdQ">
    <location>
        <begin position="1"/>
        <end position="237"/>
    </location>
</feature>
<feature type="topological domain" description="Periplasmic" evidence="1">
    <location>
        <begin position="1"/>
        <end position="17"/>
    </location>
</feature>
<feature type="transmembrane region" description="Helical" evidence="1">
    <location>
        <begin position="18"/>
        <end position="38"/>
    </location>
</feature>
<feature type="topological domain" description="Cytoplasmic" evidence="1">
    <location>
        <begin position="39"/>
        <end position="50"/>
    </location>
</feature>
<feature type="transmembrane region" description="Helical" evidence="1">
    <location>
        <begin position="51"/>
        <end position="71"/>
    </location>
</feature>
<feature type="topological domain" description="Periplasmic" evidence="1">
    <location>
        <begin position="72"/>
        <end position="79"/>
    </location>
</feature>
<feature type="transmembrane region" description="Helical" evidence="1">
    <location>
        <begin position="80"/>
        <end position="100"/>
    </location>
</feature>
<feature type="topological domain" description="Cytoplasmic" evidence="1">
    <location>
        <begin position="101"/>
        <end position="124"/>
    </location>
</feature>
<feature type="transmembrane region" description="Helical" evidence="1">
    <location>
        <begin position="125"/>
        <end position="145"/>
    </location>
</feature>
<feature type="topological domain" description="Periplasmic" evidence="1">
    <location>
        <begin position="146"/>
        <end position="151"/>
    </location>
</feature>
<feature type="transmembrane region" description="Helical" evidence="1">
    <location>
        <begin position="152"/>
        <end position="172"/>
    </location>
</feature>
<feature type="topological domain" description="Cytoplasmic" evidence="1">
    <location>
        <begin position="173"/>
        <end position="186"/>
    </location>
</feature>
<feature type="transmembrane region" description="Helical" evidence="1">
    <location>
        <begin position="187"/>
        <end position="207"/>
    </location>
</feature>
<feature type="topological domain" description="Periplasmic" evidence="1">
    <location>
        <begin position="208"/>
        <end position="209"/>
    </location>
</feature>
<feature type="transmembrane region" description="Helical" evidence="1">
    <location>
        <begin position="210"/>
        <end position="230"/>
    </location>
</feature>
<feature type="topological domain" description="Cytoplasmic" evidence="1">
    <location>
        <begin position="231"/>
        <end position="237"/>
    </location>
</feature>
<name>YGDQ_ECOLI</name>
<reference key="1">
    <citation type="journal article" date="1997" name="Science">
        <title>The complete genome sequence of Escherichia coli K-12.</title>
        <authorList>
            <person name="Blattner F.R."/>
            <person name="Plunkett G. III"/>
            <person name="Bloch C.A."/>
            <person name="Perna N.T."/>
            <person name="Burland V."/>
            <person name="Riley M."/>
            <person name="Collado-Vides J."/>
            <person name="Glasner J.D."/>
            <person name="Rode C.K."/>
            <person name="Mayhew G.F."/>
            <person name="Gregor J."/>
            <person name="Davis N.W."/>
            <person name="Kirkpatrick H.A."/>
            <person name="Goeden M.A."/>
            <person name="Rose D.J."/>
            <person name="Mau B."/>
            <person name="Shao Y."/>
        </authorList>
    </citation>
    <scope>NUCLEOTIDE SEQUENCE [LARGE SCALE GENOMIC DNA]</scope>
    <source>
        <strain>K12 / MG1655 / ATCC 47076</strain>
    </source>
</reference>
<reference key="2">
    <citation type="journal article" date="2006" name="Mol. Syst. Biol.">
        <title>Highly accurate genome sequences of Escherichia coli K-12 strains MG1655 and W3110.</title>
        <authorList>
            <person name="Hayashi K."/>
            <person name="Morooka N."/>
            <person name="Yamamoto Y."/>
            <person name="Fujita K."/>
            <person name="Isono K."/>
            <person name="Choi S."/>
            <person name="Ohtsubo E."/>
            <person name="Baba T."/>
            <person name="Wanner B.L."/>
            <person name="Mori H."/>
            <person name="Horiuchi T."/>
        </authorList>
    </citation>
    <scope>NUCLEOTIDE SEQUENCE [LARGE SCALE GENOMIC DNA]</scope>
    <source>
        <strain>K12 / W3110 / ATCC 27325 / DSM 5911</strain>
    </source>
</reference>
<reference key="3">
    <citation type="journal article" date="2005" name="Science">
        <title>Global topology analysis of the Escherichia coli inner membrane proteome.</title>
        <authorList>
            <person name="Daley D.O."/>
            <person name="Rapp M."/>
            <person name="Granseth E."/>
            <person name="Melen K."/>
            <person name="Drew D."/>
            <person name="von Heijne G."/>
        </authorList>
    </citation>
    <scope>TOPOLOGY [LARGE SCALE ANALYSIS]</scope>
    <source>
        <strain>K12 / MG1655 / ATCC 47076</strain>
    </source>
</reference>
<dbReference type="EMBL" id="U29581">
    <property type="protein sequence ID" value="AAB40479.1"/>
    <property type="molecule type" value="Genomic_DNA"/>
</dbReference>
<dbReference type="EMBL" id="U00096">
    <property type="protein sequence ID" value="AAC75871.1"/>
    <property type="molecule type" value="Genomic_DNA"/>
</dbReference>
<dbReference type="EMBL" id="AP009048">
    <property type="protein sequence ID" value="BAE76901.1"/>
    <property type="molecule type" value="Genomic_DNA"/>
</dbReference>
<dbReference type="PIR" id="A65066">
    <property type="entry name" value="A65066"/>
</dbReference>
<dbReference type="RefSeq" id="NP_417309.1">
    <property type="nucleotide sequence ID" value="NC_000913.3"/>
</dbReference>
<dbReference type="RefSeq" id="WP_000895624.1">
    <property type="nucleotide sequence ID" value="NZ_STEB01000034.1"/>
</dbReference>
<dbReference type="BioGRID" id="4263142">
    <property type="interactions" value="15"/>
</dbReference>
<dbReference type="FunCoup" id="P67127">
    <property type="interactions" value="205"/>
</dbReference>
<dbReference type="STRING" id="511145.b2832"/>
<dbReference type="PaxDb" id="511145-b2832"/>
<dbReference type="EnsemblBacteria" id="AAC75871">
    <property type="protein sequence ID" value="AAC75871"/>
    <property type="gene ID" value="b2832"/>
</dbReference>
<dbReference type="GeneID" id="947295"/>
<dbReference type="KEGG" id="ecj:JW2800"/>
<dbReference type="KEGG" id="eco:b2832"/>
<dbReference type="KEGG" id="ecoc:C3026_15555"/>
<dbReference type="PATRIC" id="fig|1411691.4.peg.3902"/>
<dbReference type="EchoBASE" id="EB2897"/>
<dbReference type="eggNOG" id="COG0861">
    <property type="taxonomic scope" value="Bacteria"/>
</dbReference>
<dbReference type="HOGENOM" id="CLU_064910_0_0_6"/>
<dbReference type="InParanoid" id="P67127"/>
<dbReference type="OMA" id="IEIMFLD"/>
<dbReference type="OrthoDB" id="9805314at2"/>
<dbReference type="PhylomeDB" id="P67127"/>
<dbReference type="BioCyc" id="EcoCyc:G7460-MONOMER"/>
<dbReference type="PRO" id="PR:P67127"/>
<dbReference type="Proteomes" id="UP000000625">
    <property type="component" value="Chromosome"/>
</dbReference>
<dbReference type="GO" id="GO:0005886">
    <property type="term" value="C:plasma membrane"/>
    <property type="evidence" value="ECO:0000314"/>
    <property type="project" value="EcoCyc"/>
</dbReference>
<dbReference type="InterPro" id="IPR005496">
    <property type="entry name" value="Integral_membrane_TerC"/>
</dbReference>
<dbReference type="PANTHER" id="PTHR30060:SF0">
    <property type="entry name" value="COILED-COIL PROTEIN (DUF2040)-RELATED"/>
    <property type="match status" value="1"/>
</dbReference>
<dbReference type="PANTHER" id="PTHR30060">
    <property type="entry name" value="INNER MEMBRANE PROTEIN"/>
    <property type="match status" value="1"/>
</dbReference>
<dbReference type="Pfam" id="PF03741">
    <property type="entry name" value="TerC"/>
    <property type="match status" value="1"/>
</dbReference>
<organism>
    <name type="scientific">Escherichia coli (strain K12)</name>
    <dbReference type="NCBI Taxonomy" id="83333"/>
    <lineage>
        <taxon>Bacteria</taxon>
        <taxon>Pseudomonadati</taxon>
        <taxon>Pseudomonadota</taxon>
        <taxon>Gammaproteobacteria</taxon>
        <taxon>Enterobacterales</taxon>
        <taxon>Enterobacteriaceae</taxon>
        <taxon>Escherichia</taxon>
    </lineage>
</organism>
<protein>
    <recommendedName>
        <fullName>UPF0053 inner membrane protein YgdQ</fullName>
    </recommendedName>
</protein>
<keyword id="KW-0997">Cell inner membrane</keyword>
<keyword id="KW-1003">Cell membrane</keyword>
<keyword id="KW-0472">Membrane</keyword>
<keyword id="KW-1185">Reference proteome</keyword>
<keyword id="KW-0812">Transmembrane</keyword>
<keyword id="KW-1133">Transmembrane helix</keyword>